<accession>P50990</accession>
<accession>A6NN54</accession>
<accession>B4DEM7</accession>
<accession>B4DQH4</accession>
<accession>Q4VBP8</accession>
<reference key="1">
    <citation type="journal article" date="1994" name="DNA Res.">
        <title>Prediction of the coding sequences of unidentified human genes. I. The coding sequences of 40 new genes (KIAA0001-KIAA0040) deduced by analysis of randomly sampled cDNA clones from human immature myeloid cell line KG-1.</title>
        <authorList>
            <person name="Nomura N."/>
            <person name="Miyajima N."/>
            <person name="Sazuka T."/>
            <person name="Tanaka A."/>
            <person name="Kawarabayasi Y."/>
            <person name="Sato S."/>
            <person name="Nagase T."/>
            <person name="Seki N."/>
            <person name="Ishikawa K."/>
            <person name="Tabata S."/>
        </authorList>
    </citation>
    <scope>NUCLEOTIDE SEQUENCE [LARGE SCALE MRNA] (ISOFORM 1)</scope>
    <source>
        <tissue>Bone marrow</tissue>
    </source>
</reference>
<reference key="2">
    <citation type="journal article" date="1995" name="DNA Res.">
        <title>Nucleotide sequence surrounding the locus marker D21S246 on human chromosome 21.</title>
        <authorList>
            <person name="Yamazaki M."/>
            <person name="Ono A."/>
            <person name="Watanabe K."/>
            <person name="Sasaki K."/>
            <person name="Tashiro H."/>
            <person name="Nomura T."/>
        </authorList>
    </citation>
    <scope>NUCLEOTIDE SEQUENCE [GENOMIC DNA]</scope>
</reference>
<reference key="3">
    <citation type="submission" date="1999-02" db="EMBL/GenBank/DDBJ databases">
        <authorList>
            <person name="Taudien S."/>
            <person name="Dagand E."/>
            <person name="Delabar J."/>
            <person name="Nordsiek G."/>
            <person name="Drescher B."/>
            <person name="Weber J."/>
            <person name="Schattevoy R."/>
            <person name="Menzel U."/>
            <person name="Yaspo M.-L."/>
            <person name="Rosenthal A."/>
        </authorList>
    </citation>
    <scope>NUCLEOTIDE SEQUENCE [GENOMIC DNA]</scope>
</reference>
<reference key="4">
    <citation type="journal article" date="2004" name="Nat. Genet.">
        <title>Complete sequencing and characterization of 21,243 full-length human cDNAs.</title>
        <authorList>
            <person name="Ota T."/>
            <person name="Suzuki Y."/>
            <person name="Nishikawa T."/>
            <person name="Otsuki T."/>
            <person name="Sugiyama T."/>
            <person name="Irie R."/>
            <person name="Wakamatsu A."/>
            <person name="Hayashi K."/>
            <person name="Sato H."/>
            <person name="Nagai K."/>
            <person name="Kimura K."/>
            <person name="Makita H."/>
            <person name="Sekine M."/>
            <person name="Obayashi M."/>
            <person name="Nishi T."/>
            <person name="Shibahara T."/>
            <person name="Tanaka T."/>
            <person name="Ishii S."/>
            <person name="Yamamoto J."/>
            <person name="Saito K."/>
            <person name="Kawai Y."/>
            <person name="Isono Y."/>
            <person name="Nakamura Y."/>
            <person name="Nagahari K."/>
            <person name="Murakami K."/>
            <person name="Yasuda T."/>
            <person name="Iwayanagi T."/>
            <person name="Wagatsuma M."/>
            <person name="Shiratori A."/>
            <person name="Sudo H."/>
            <person name="Hosoiri T."/>
            <person name="Kaku Y."/>
            <person name="Kodaira H."/>
            <person name="Kondo H."/>
            <person name="Sugawara M."/>
            <person name="Takahashi M."/>
            <person name="Kanda K."/>
            <person name="Yokoi T."/>
            <person name="Furuya T."/>
            <person name="Kikkawa E."/>
            <person name="Omura Y."/>
            <person name="Abe K."/>
            <person name="Kamihara K."/>
            <person name="Katsuta N."/>
            <person name="Sato K."/>
            <person name="Tanikawa M."/>
            <person name="Yamazaki M."/>
            <person name="Ninomiya K."/>
            <person name="Ishibashi T."/>
            <person name="Yamashita H."/>
            <person name="Murakawa K."/>
            <person name="Fujimori K."/>
            <person name="Tanai H."/>
            <person name="Kimata M."/>
            <person name="Watanabe M."/>
            <person name="Hiraoka S."/>
            <person name="Chiba Y."/>
            <person name="Ishida S."/>
            <person name="Ono Y."/>
            <person name="Takiguchi S."/>
            <person name="Watanabe S."/>
            <person name="Yosida M."/>
            <person name="Hotuta T."/>
            <person name="Kusano J."/>
            <person name="Kanehori K."/>
            <person name="Takahashi-Fujii A."/>
            <person name="Hara H."/>
            <person name="Tanase T.-O."/>
            <person name="Nomura Y."/>
            <person name="Togiya S."/>
            <person name="Komai F."/>
            <person name="Hara R."/>
            <person name="Takeuchi K."/>
            <person name="Arita M."/>
            <person name="Imose N."/>
            <person name="Musashino K."/>
            <person name="Yuuki H."/>
            <person name="Oshima A."/>
            <person name="Sasaki N."/>
            <person name="Aotsuka S."/>
            <person name="Yoshikawa Y."/>
            <person name="Matsunawa H."/>
            <person name="Ichihara T."/>
            <person name="Shiohata N."/>
            <person name="Sano S."/>
            <person name="Moriya S."/>
            <person name="Momiyama H."/>
            <person name="Satoh N."/>
            <person name="Takami S."/>
            <person name="Terashima Y."/>
            <person name="Suzuki O."/>
            <person name="Nakagawa S."/>
            <person name="Senoh A."/>
            <person name="Mizoguchi H."/>
            <person name="Goto Y."/>
            <person name="Shimizu F."/>
            <person name="Wakebe H."/>
            <person name="Hishigaki H."/>
            <person name="Watanabe T."/>
            <person name="Sugiyama A."/>
            <person name="Takemoto M."/>
            <person name="Kawakami B."/>
            <person name="Yamazaki M."/>
            <person name="Watanabe K."/>
            <person name="Kumagai A."/>
            <person name="Itakura S."/>
            <person name="Fukuzumi Y."/>
            <person name="Fujimori Y."/>
            <person name="Komiyama M."/>
            <person name="Tashiro H."/>
            <person name="Tanigami A."/>
            <person name="Fujiwara T."/>
            <person name="Ono T."/>
            <person name="Yamada K."/>
            <person name="Fujii Y."/>
            <person name="Ozaki K."/>
            <person name="Hirao M."/>
            <person name="Ohmori Y."/>
            <person name="Kawabata A."/>
            <person name="Hikiji T."/>
            <person name="Kobatake N."/>
            <person name="Inagaki H."/>
            <person name="Ikema Y."/>
            <person name="Okamoto S."/>
            <person name="Okitani R."/>
            <person name="Kawakami T."/>
            <person name="Noguchi S."/>
            <person name="Itoh T."/>
            <person name="Shigeta K."/>
            <person name="Senba T."/>
            <person name="Matsumura K."/>
            <person name="Nakajima Y."/>
            <person name="Mizuno T."/>
            <person name="Morinaga M."/>
            <person name="Sasaki M."/>
            <person name="Togashi T."/>
            <person name="Oyama M."/>
            <person name="Hata H."/>
            <person name="Watanabe M."/>
            <person name="Komatsu T."/>
            <person name="Mizushima-Sugano J."/>
            <person name="Satoh T."/>
            <person name="Shirai Y."/>
            <person name="Takahashi Y."/>
            <person name="Nakagawa K."/>
            <person name="Okumura K."/>
            <person name="Nagase T."/>
            <person name="Nomura N."/>
            <person name="Kikuchi H."/>
            <person name="Masuho Y."/>
            <person name="Yamashita R."/>
            <person name="Nakai K."/>
            <person name="Yada T."/>
            <person name="Nakamura Y."/>
            <person name="Ohara O."/>
            <person name="Isogai T."/>
            <person name="Sugano S."/>
        </authorList>
    </citation>
    <scope>NUCLEOTIDE SEQUENCE [LARGE SCALE MRNA] (ISOFORMS 2 AND 3)</scope>
    <source>
        <tissue>Cerebellum</tissue>
    </source>
</reference>
<reference key="5">
    <citation type="journal article" date="2000" name="Nature">
        <title>The DNA sequence of human chromosome 21.</title>
        <authorList>
            <person name="Hattori M."/>
            <person name="Fujiyama A."/>
            <person name="Taylor T.D."/>
            <person name="Watanabe H."/>
            <person name="Yada T."/>
            <person name="Park H.-S."/>
            <person name="Toyoda A."/>
            <person name="Ishii K."/>
            <person name="Totoki Y."/>
            <person name="Choi D.-K."/>
            <person name="Groner Y."/>
            <person name="Soeda E."/>
            <person name="Ohki M."/>
            <person name="Takagi T."/>
            <person name="Sakaki Y."/>
            <person name="Taudien S."/>
            <person name="Blechschmidt K."/>
            <person name="Polley A."/>
            <person name="Menzel U."/>
            <person name="Delabar J."/>
            <person name="Kumpf K."/>
            <person name="Lehmann R."/>
            <person name="Patterson D."/>
            <person name="Reichwald K."/>
            <person name="Rump A."/>
            <person name="Schillhabel M."/>
            <person name="Schudy A."/>
            <person name="Zimmermann W."/>
            <person name="Rosenthal A."/>
            <person name="Kudoh J."/>
            <person name="Shibuya K."/>
            <person name="Kawasaki K."/>
            <person name="Asakawa S."/>
            <person name="Shintani A."/>
            <person name="Sasaki T."/>
            <person name="Nagamine K."/>
            <person name="Mitsuyama S."/>
            <person name="Antonarakis S.E."/>
            <person name="Minoshima S."/>
            <person name="Shimizu N."/>
            <person name="Nordsiek G."/>
            <person name="Hornischer K."/>
            <person name="Brandt P."/>
            <person name="Scharfe M."/>
            <person name="Schoen O."/>
            <person name="Desario A."/>
            <person name="Reichelt J."/>
            <person name="Kauer G."/>
            <person name="Bloecker H."/>
            <person name="Ramser J."/>
            <person name="Beck A."/>
            <person name="Klages S."/>
            <person name="Hennig S."/>
            <person name="Riesselmann L."/>
            <person name="Dagand E."/>
            <person name="Wehrmeyer S."/>
            <person name="Borzym K."/>
            <person name="Gardiner K."/>
            <person name="Nizetic D."/>
            <person name="Francis F."/>
            <person name="Lehrach H."/>
            <person name="Reinhardt R."/>
            <person name="Yaspo M.-L."/>
        </authorList>
    </citation>
    <scope>NUCLEOTIDE SEQUENCE [LARGE SCALE GENOMIC DNA]</scope>
</reference>
<reference key="6">
    <citation type="journal article" date="2004" name="Genome Res.">
        <title>The status, quality, and expansion of the NIH full-length cDNA project: the Mammalian Gene Collection (MGC).</title>
        <authorList>
            <consortium name="The MGC Project Team"/>
        </authorList>
    </citation>
    <scope>NUCLEOTIDE SEQUENCE [LARGE SCALE MRNA] (ISOFORM 1)</scope>
    <source>
        <tissue>Chondrosarcoma</tissue>
        <tissue>Liver</tissue>
    </source>
</reference>
<reference key="7">
    <citation type="submission" date="2004-10" db="UniProtKB">
        <authorList>
            <person name="Bienvenut W.V."/>
        </authorList>
    </citation>
    <scope>PROTEIN SEQUENCE OF 2-16; 55-74; 156-165; 172-181; 283-296; 408-421; 441-450 AND 510-520</scope>
    <scope>CLEAVAGE OF INITIATOR METHIONINE</scope>
    <scope>ACETYLATION AT ALA-2</scope>
    <scope>IDENTIFICATION BY MASS SPECTROMETRY</scope>
    <source>
        <tissue>B-cell lymphoma</tissue>
    </source>
</reference>
<reference key="8">
    <citation type="journal article" date="1995" name="Gene">
        <title>The eighth Cct gene, Cctq, encoding the theta subunit of the cytosolic chaperonin containing TCP-1.</title>
        <authorList>
            <person name="Kubota H."/>
            <person name="Hynes G."/>
            <person name="Willison K."/>
        </authorList>
    </citation>
    <scope>NUCLEOTIDE SEQUENCE [MRNA] OF 33-65 (ISOFORM 1/2)</scope>
</reference>
<reference key="9">
    <citation type="journal article" date="1999" name="Int. J. Cancer">
        <title>Antigens recognized by autologous antibody in patients with renal-cell carcinoma.</title>
        <authorList>
            <person name="Scanlan M.J."/>
            <person name="Gordan J.D."/>
            <person name="Williamson B."/>
            <person name="Stockert E."/>
            <person name="Bander N.H."/>
            <person name="Jongeneel C.V."/>
            <person name="Gure A.O."/>
            <person name="Jaeger D."/>
            <person name="Jaeger E."/>
            <person name="Knuth A."/>
            <person name="Chen Y.-T."/>
            <person name="Old L.J."/>
        </authorList>
    </citation>
    <scope>IDENTIFICATION AS A RENAL CANCER ANTIGEN</scope>
    <source>
        <tissue>Renal cell carcinoma</tissue>
    </source>
</reference>
<reference key="10">
    <citation type="journal article" date="2003" name="J. Biol. Chem.">
        <title>A product of the human gene adjacent to parkin is a component of Lewy bodies and suppresses Pael receptor-induced cell death.</title>
        <authorList>
            <person name="Imai Y."/>
            <person name="Soda M."/>
            <person name="Murakami T."/>
            <person name="Shoji M."/>
            <person name="Abe K."/>
            <person name="Takahashi R."/>
        </authorList>
    </citation>
    <scope>INTERACTION WITH PACRG</scope>
</reference>
<reference key="11">
    <citation type="journal article" date="2003" name="Nature">
        <title>Proteomic characterization of the human centrosome by protein correlation profiling.</title>
        <authorList>
            <person name="Andersen J.S."/>
            <person name="Wilkinson C.J."/>
            <person name="Mayor T."/>
            <person name="Mortensen P."/>
            <person name="Nigg E.A."/>
            <person name="Mann M."/>
        </authorList>
    </citation>
    <scope>IDENTIFICATION BY MASS SPECTROMETRY</scope>
    <scope>SUBCELLULAR LOCATION [LARGE SCALE ANALYSIS]</scope>
    <source>
        <tissue>Lymphoblast</tissue>
    </source>
</reference>
<reference key="12">
    <citation type="journal article" date="2005" name="Nat. Biotechnol.">
        <title>Immunoaffinity profiling of tyrosine phosphorylation in cancer cells.</title>
        <authorList>
            <person name="Rush J."/>
            <person name="Moritz A."/>
            <person name="Lee K.A."/>
            <person name="Guo A."/>
            <person name="Goss V.L."/>
            <person name="Spek E.J."/>
            <person name="Zhang H."/>
            <person name="Zha X.-M."/>
            <person name="Polakiewicz R.D."/>
            <person name="Comb M.J."/>
        </authorList>
    </citation>
    <scope>PHOSPHORYLATION [LARGE SCALE ANALYSIS] AT TYR-505</scope>
    <scope>IDENTIFICATION BY MASS SPECTROMETRY [LARGE SCALE ANALYSIS]</scope>
</reference>
<reference key="13">
    <citation type="journal article" date="2008" name="Proc. Natl. Acad. Sci. U.S.A.">
        <title>A quantitative atlas of mitotic phosphorylation.</title>
        <authorList>
            <person name="Dephoure N."/>
            <person name="Zhou C."/>
            <person name="Villen J."/>
            <person name="Beausoleil S.A."/>
            <person name="Bakalarski C.E."/>
            <person name="Elledge S.J."/>
            <person name="Gygi S.P."/>
        </authorList>
    </citation>
    <scope>PHOSPHORYLATION [LARGE SCALE ANALYSIS] AT SER-23</scope>
    <scope>IDENTIFICATION BY MASS SPECTROMETRY [LARGE SCALE ANALYSIS]</scope>
    <source>
        <tissue>Cervix carcinoma</tissue>
    </source>
</reference>
<reference key="14">
    <citation type="journal article" date="2009" name="Sci. Signal.">
        <title>Quantitative phosphoproteomic analysis of T cell receptor signaling reveals system-wide modulation of protein-protein interactions.</title>
        <authorList>
            <person name="Mayya V."/>
            <person name="Lundgren D.H."/>
            <person name="Hwang S.-I."/>
            <person name="Rezaul K."/>
            <person name="Wu L."/>
            <person name="Eng J.K."/>
            <person name="Rodionov V."/>
            <person name="Han D.K."/>
        </authorList>
    </citation>
    <scope>PHOSPHORYLATION [LARGE SCALE ANALYSIS] AT SER-23 AND TYR-30</scope>
    <scope>IDENTIFICATION BY MASS SPECTROMETRY [LARGE SCALE ANALYSIS]</scope>
    <source>
        <tissue>Leukemic T-cell</tissue>
    </source>
</reference>
<reference key="15">
    <citation type="journal article" date="2009" name="Science">
        <title>Lysine acetylation targets protein complexes and co-regulates major cellular functions.</title>
        <authorList>
            <person name="Choudhary C."/>
            <person name="Kumar C."/>
            <person name="Gnad F."/>
            <person name="Nielsen M.L."/>
            <person name="Rehman M."/>
            <person name="Walther T.C."/>
            <person name="Olsen J.V."/>
            <person name="Mann M."/>
        </authorList>
    </citation>
    <scope>ACETYLATION [LARGE SCALE ANALYSIS] AT LYS-318; LYS-400 AND LYS-466</scope>
    <scope>IDENTIFICATION BY MASS SPECTROMETRY [LARGE SCALE ANALYSIS]</scope>
</reference>
<reference key="16">
    <citation type="journal article" date="2010" name="Proc. Natl. Acad. Sci. U.S.A.">
        <title>BBS6, BBS10, and BBS12 form a complex with CCT/TRiC family chaperonins and mediate BBSome assembly.</title>
        <authorList>
            <person name="Seo S."/>
            <person name="Baye L.M."/>
            <person name="Schulz N.P."/>
            <person name="Beck J.S."/>
            <person name="Zhang Q."/>
            <person name="Slusarski D.C."/>
            <person name="Sheffield V.C."/>
        </authorList>
    </citation>
    <scope>FUNCTION</scope>
    <scope>SUBCELLULAR LOCATION</scope>
    <scope>IDENTIFICATION IN THE CHAPERONIN-CONTAINING T-COMPLEX</scope>
</reference>
<reference key="17">
    <citation type="journal article" date="2011" name="BMC Syst. Biol.">
        <title>Initial characterization of the human central proteome.</title>
        <authorList>
            <person name="Burkard T.R."/>
            <person name="Planyavsky M."/>
            <person name="Kaupe I."/>
            <person name="Breitwieser F.P."/>
            <person name="Buerckstuemmer T."/>
            <person name="Bennett K.L."/>
            <person name="Superti-Furga G."/>
            <person name="Colinge J."/>
        </authorList>
    </citation>
    <scope>IDENTIFICATION BY MASS SPECTROMETRY [LARGE SCALE ANALYSIS]</scope>
</reference>
<reference key="18">
    <citation type="journal article" date="2013" name="J. Proteome Res.">
        <title>Toward a comprehensive characterization of a human cancer cell phosphoproteome.</title>
        <authorList>
            <person name="Zhou H."/>
            <person name="Di Palma S."/>
            <person name="Preisinger C."/>
            <person name="Peng M."/>
            <person name="Polat A.N."/>
            <person name="Heck A.J."/>
            <person name="Mohammed S."/>
        </authorList>
    </citation>
    <scope>PHOSPHORYLATION [LARGE SCALE ANALYSIS] AT SER-23; TYR-30; SER-162; SER-213; SER-269; SER-317 AND SER-537</scope>
    <scope>IDENTIFICATION BY MASS SPECTROMETRY [LARGE SCALE ANALYSIS]</scope>
    <source>
        <tissue>Cervix carcinoma</tissue>
        <tissue>Erythroleukemia</tissue>
    </source>
</reference>
<reference key="19">
    <citation type="journal article" date="2014" name="Cell">
        <title>Proteostatic control of telomerase function through TRiC-mediated folding of TCAB1.</title>
        <authorList>
            <person name="Freund A."/>
            <person name="Zhong F.L."/>
            <person name="Venteicher A.S."/>
            <person name="Meng Z."/>
            <person name="Veenstra T.D."/>
            <person name="Frydman J."/>
            <person name="Artandi S.E."/>
        </authorList>
    </citation>
    <scope>FUNCTION</scope>
    <scope>IDENTIFICATION IN THE CHAPERONIN-CONTAINING T-COMPLEX</scope>
</reference>
<reference key="20">
    <citation type="journal article" date="2014" name="J. Proteomics">
        <title>An enzyme assisted RP-RPLC approach for in-depth analysis of human liver phosphoproteome.</title>
        <authorList>
            <person name="Bian Y."/>
            <person name="Song C."/>
            <person name="Cheng K."/>
            <person name="Dong M."/>
            <person name="Wang F."/>
            <person name="Huang J."/>
            <person name="Sun D."/>
            <person name="Wang L."/>
            <person name="Ye M."/>
            <person name="Zou H."/>
        </authorList>
    </citation>
    <scope>IDENTIFICATION BY MASS SPECTROMETRY [LARGE SCALE ANALYSIS]</scope>
    <source>
        <tissue>Liver</tissue>
    </source>
</reference>
<reference key="21">
    <citation type="journal article" date="2014" name="Nat. Struct. Mol. Biol.">
        <title>Uncovering global SUMOylation signaling networks in a site-specific manner.</title>
        <authorList>
            <person name="Hendriks I.A."/>
            <person name="D'Souza R.C."/>
            <person name="Yang B."/>
            <person name="Verlaan-de Vries M."/>
            <person name="Mann M."/>
            <person name="Vertegaal A.C."/>
        </authorList>
    </citation>
    <scope>SUMOYLATION [LARGE SCALE ANALYSIS] AT LYS-534</scope>
    <scope>IDENTIFICATION BY MASS SPECTROMETRY [LARGE SCALE ANALYSIS]</scope>
</reference>
<reference key="22">
    <citation type="journal article" date="2014" name="Proc. Natl. Acad. Sci. U.S.A.">
        <title>Mapping of SUMO sites and analysis of SUMOylation changes induced by external stimuli.</title>
        <authorList>
            <person name="Impens F."/>
            <person name="Radoshevich L."/>
            <person name="Cossart P."/>
            <person name="Ribet D."/>
        </authorList>
    </citation>
    <scope>SUMOYLATION [LARGE SCALE ANALYSIS] AT LYS-459</scope>
    <scope>IDENTIFICATION BY MASS SPECTROMETRY [LARGE SCALE ANALYSIS]</scope>
</reference>
<reference key="23">
    <citation type="journal article" date="2015" name="Mol. Cell. Proteomics">
        <title>System-wide analysis of SUMOylation dynamics in response to replication stress reveals novel small ubiquitin-like modified target proteins and acceptor lysines relevant for genome stability.</title>
        <authorList>
            <person name="Xiao Z."/>
            <person name="Chang J.G."/>
            <person name="Hendriks I.A."/>
            <person name="Sigurdsson J.O."/>
            <person name="Olsen J.V."/>
            <person name="Vertegaal A.C."/>
        </authorList>
    </citation>
    <scope>SUMOYLATION [LARGE SCALE ANALYSIS] AT LYS-534 AND LYS-539</scope>
    <scope>IDENTIFICATION BY MASS SPECTROMETRY [LARGE SCALE ANALYSIS]</scope>
</reference>
<reference key="24">
    <citation type="journal article" date="2015" name="Proteomics">
        <title>N-terminome analysis of the human mitochondrial proteome.</title>
        <authorList>
            <person name="Vaca Jacome A.S."/>
            <person name="Rabilloud T."/>
            <person name="Schaeffer-Reiss C."/>
            <person name="Rompais M."/>
            <person name="Ayoub D."/>
            <person name="Lane L."/>
            <person name="Bairoch A."/>
            <person name="Van Dorsselaer A."/>
            <person name="Carapito C."/>
        </authorList>
    </citation>
    <scope>IDENTIFICATION BY MASS SPECTROMETRY [LARGE SCALE ANALYSIS]</scope>
</reference>
<reference key="25">
    <citation type="journal article" date="2017" name="Nat. Struct. Mol. Biol.">
        <title>Site-specific mapping of the human SUMO proteome reveals co-modification with phosphorylation.</title>
        <authorList>
            <person name="Hendriks I.A."/>
            <person name="Lyon D."/>
            <person name="Young C."/>
            <person name="Jensen L.J."/>
            <person name="Vertegaal A.C."/>
            <person name="Nielsen M.L."/>
        </authorList>
    </citation>
    <scope>SUMOYLATION [LARGE SCALE ANALYSIS] AT LYS-224; LYS-254; LYS-260; LYS-534 AND LYS-539</scope>
    <scope>IDENTIFICATION BY MASS SPECTROMETRY [LARGE SCALE ANALYSIS]</scope>
</reference>
<reference evidence="21 22 23 24 25" key="26">
    <citation type="journal article" date="2022" name="Cell">
        <title>Structural visualization of the tubulin folding pathway directed by human chaperonin TRiC/CCT.</title>
        <authorList>
            <person name="Gestaut D."/>
            <person name="Zhao Y."/>
            <person name="Park J."/>
            <person name="Ma B."/>
            <person name="Leitner A."/>
            <person name="Collier M."/>
            <person name="Pintilie G."/>
            <person name="Roh S.H."/>
            <person name="Chiu W."/>
            <person name="Frydman J."/>
        </authorList>
    </citation>
    <scope>STRUCTURE BY ELECTRON MICROSCOPY (2.90 ANGSTROMS) IN COMPLEX WITH TUBULIN</scope>
    <scope>FUNCTION</scope>
    <scope>SUBUNIT</scope>
    <scope>ADP AND MG(2+) BINDING SITES</scope>
    <scope>CATALYTIC ACTIVITY</scope>
</reference>
<reference evidence="17 18 19 20" key="27">
    <citation type="journal article" date="2022" name="Nat. Struct. Mol. Biol.">
        <title>Snapshots of actin and tubulin folding inside the TRiC chaperonin.</title>
        <authorList>
            <person name="Kelly J.J."/>
            <person name="Tranter D."/>
            <person name="Pardon E."/>
            <person name="Chi G."/>
            <person name="Kramer H."/>
            <person name="Happonen L."/>
            <person name="Knee K.M."/>
            <person name="Janz J.M."/>
            <person name="Steyaert J."/>
            <person name="Bulawa C."/>
            <person name="Paavilainen V.O."/>
            <person name="Huiskonen J.T."/>
            <person name="Yue W.W."/>
        </authorList>
    </citation>
    <scope>STRUCTURE BY ELECTRON MICROSCOPY (2.50 ANGSTROMS) IN COMPLEX WITH TUBULIN AND IN COMPLEX WITH ACTIN</scope>
    <scope>FUNCTION</scope>
    <scope>SUBUNIT</scope>
    <scope>ADP AND MG(2+) BINDING SITES</scope>
    <scope>CATALYTIC ACTIVITY</scope>
</reference>
<reference evidence="26 27 28 29 30 31 32 33" key="28">
    <citation type="journal article" date="2023" name="Commun. Biol.">
        <title>Pathway and mechanism of tubulin folding mediated by TRiC/CCT along its ATPase cycle revealed using cryo-EM.</title>
        <authorList>
            <person name="Liu C."/>
            <person name="Jin M."/>
            <person name="Wang S."/>
            <person name="Han W."/>
            <person name="Zhao Q."/>
            <person name="Wang Y."/>
            <person name="Xu C."/>
            <person name="Diao L."/>
            <person name="Yin Y."/>
            <person name="Peng C."/>
            <person name="Peng C."/>
            <person name="Bao L."/>
            <person name="Wang Y."/>
            <person name="Cong Y."/>
        </authorList>
    </citation>
    <scope>STRUCTURE BY ELECTRON MICROSCOPY (3.10 ANGSTROMS) IN COMPLEX WITH TUBULIN</scope>
    <scope>FUNCTION</scope>
    <scope>SUBUNIT</scope>
    <scope>ATP AND ADP BINDING SITES</scope>
    <scope>CATALYTIC ACTIVITY</scope>
</reference>
<reference key="29">
    <citation type="journal article" date="2024" name="Science">
        <title>Brain malformations and seizures by impaired chaperonin function of TRiC.</title>
        <authorList>
            <person name="Kraft F."/>
            <person name="Rodriguez-Aliaga P."/>
            <person name="Yuan W."/>
            <person name="Franken L."/>
            <person name="Zajt K."/>
            <person name="Hasan D."/>
            <person name="Lee T.T."/>
            <person name="Flex E."/>
            <person name="Hentschel A."/>
            <person name="Innes A.M."/>
            <person name="Zheng B."/>
            <person name="Julia Suh D.S."/>
            <person name="Knopp C."/>
            <person name="Lausberg E."/>
            <person name="Krause J."/>
            <person name="Zhang X."/>
            <person name="Trapane P."/>
            <person name="Carroll R."/>
            <person name="McClatchey M."/>
            <person name="Fry A.E."/>
            <person name="Wang L."/>
            <person name="Giesselmann S."/>
            <person name="Hoang H."/>
            <person name="Baldridge D."/>
            <person name="Silverman G.A."/>
            <person name="Radio F.C."/>
            <person name="Bertini E."/>
            <person name="Ciolfi A."/>
            <person name="Blood K.A."/>
            <person name="de Sainte Agathe J.M."/>
            <person name="Charles P."/>
            <person name="Bergant G."/>
            <person name="Cuturilo G."/>
            <person name="Peterlin B."/>
            <person name="Diderich K."/>
            <person name="Streff H."/>
            <person name="Robak L."/>
            <person name="Oegema R."/>
            <person name="van Binsbergen E."/>
            <person name="Herriges J."/>
            <person name="Saunders C.J."/>
            <person name="Maier A."/>
            <person name="Wolking S."/>
            <person name="Weber Y."/>
            <person name="Lochmueller H."/>
            <person name="Meyer S."/>
            <person name="Aleman A."/>
            <person name="Polavarapu K."/>
            <person name="Nicolas G."/>
            <person name="Goldenberg A."/>
            <person name="Guyant L."/>
            <person name="Pope K."/>
            <person name="Hehmeyer K.N."/>
            <person name="Monaghan K.G."/>
            <person name="Quade A."/>
            <person name="Smol T."/>
            <person name="Caumes R."/>
            <person name="Duerinckx S."/>
            <person name="Depondt C."/>
            <person name="Van Paesschen W."/>
            <person name="Rieubland C."/>
            <person name="Poloni C."/>
            <person name="Guipponi M."/>
            <person name="Arcioni S."/>
            <person name="Meuwissen M."/>
            <person name="Jansen A.C."/>
            <person name="Rosenblum J."/>
            <person name="Haack T.B."/>
            <person name="Bertrand M."/>
            <person name="Gerstner L."/>
            <person name="Magg J."/>
            <person name="Riess O."/>
            <person name="Schulz J.B."/>
            <person name="Wagner N."/>
            <person name="Wiesmann M."/>
            <person name="Weis J."/>
            <person name="Eggermann T."/>
            <person name="Begemann M."/>
            <person name="Roos A."/>
            <person name="Haeusler M."/>
            <person name="Schedl T."/>
            <person name="Tartaglia M."/>
            <person name="Bremer J."/>
            <person name="Pak S.C."/>
            <person name="Frydman J."/>
            <person name="Elbracht M."/>
            <person name="Kurth I."/>
        </authorList>
    </citation>
    <scope>INVOLVEMENT IN BRAIN DEVELOPMENTAL DISORDERS</scope>
</reference>
<name>TCPQ_HUMAN</name>
<sequence>MALHVPKAPGFAQMLKEGAKHFSGLEEAVYRNIQACKELAQTTRTAYGPNGMNKMVINHLEKLFVTNDAATILRELEVQHPAAKMIVMASHMQEQEVGDGTNFVLVFAGALLELAEELLRIGLSVSEVIEGYEIACRKAHEILPNLVCCSAKNLRDIDEVSSLLRTSIMSKQYGNEVFLAKLIAQACVSIFPDSGHFNVDNIRVCKILGSGISSSSVLHGMVFKKETEGDVTSVKDAKIAVYSCPFDGMITETKGTVLIKTAEELMNFSKGEENLMDAQVKAIADTGANVVVTGGKVADMALHYANKYNIMLVRLNSKWDLRRLCKTVGATALPRLTPPVLEEMGHCDSVYLSEVGDTQVVVFKHEKEDGAISTIVLRGSTDNLMDDIERAVDDGVNTFKVLTRDKRLVPGGGATEIELAKQITSYGETCPGLEQYAIKKFAEAFEAIPRALAENSGVKANEVISKLYAVHQEGNKNVGLDIEAEVPAVKDMLEAGILDTYLGKYWAIKLATNAAVTVLRVDQIIMAKPAGGPKPPSGKKDWDDDQND</sequence>
<evidence type="ECO:0000250" key="1">
    <source>
        <dbReference type="UniProtKB" id="P42932"/>
    </source>
</evidence>
<evidence type="ECO:0000256" key="2">
    <source>
        <dbReference type="SAM" id="MobiDB-lite"/>
    </source>
</evidence>
<evidence type="ECO:0000269" key="3">
    <source>
    </source>
</evidence>
<evidence type="ECO:0000269" key="4">
    <source>
    </source>
</evidence>
<evidence type="ECO:0000269" key="5">
    <source>
    </source>
</evidence>
<evidence type="ECO:0000269" key="6">
    <source>
    </source>
</evidence>
<evidence type="ECO:0000269" key="7">
    <source>
    </source>
</evidence>
<evidence type="ECO:0000269" key="8">
    <source>
    </source>
</evidence>
<evidence type="ECO:0000269" key="9">
    <source>
    </source>
</evidence>
<evidence type="ECO:0000269" key="10">
    <source>
    </source>
</evidence>
<evidence type="ECO:0000269" key="11">
    <source ref="7"/>
</evidence>
<evidence type="ECO:0000303" key="12">
    <source>
    </source>
</evidence>
<evidence type="ECO:0000305" key="13"/>
<evidence type="ECO:0000305" key="14">
    <source>
    </source>
</evidence>
<evidence type="ECO:0000305" key="15">
    <source>
    </source>
</evidence>
<evidence type="ECO:0000305" key="16">
    <source>
    </source>
</evidence>
<evidence type="ECO:0007744" key="17">
    <source>
        <dbReference type="PDB" id="7NVL"/>
    </source>
</evidence>
<evidence type="ECO:0007744" key="18">
    <source>
        <dbReference type="PDB" id="7NVM"/>
    </source>
</evidence>
<evidence type="ECO:0007744" key="19">
    <source>
        <dbReference type="PDB" id="7NVN"/>
    </source>
</evidence>
<evidence type="ECO:0007744" key="20">
    <source>
        <dbReference type="PDB" id="7NVO"/>
    </source>
</evidence>
<evidence type="ECO:0007744" key="21">
    <source>
        <dbReference type="PDB" id="7TRG"/>
    </source>
</evidence>
<evidence type="ECO:0007744" key="22">
    <source>
        <dbReference type="PDB" id="7TTN"/>
    </source>
</evidence>
<evidence type="ECO:0007744" key="23">
    <source>
        <dbReference type="PDB" id="7TTT"/>
    </source>
</evidence>
<evidence type="ECO:0007744" key="24">
    <source>
        <dbReference type="PDB" id="7TUB"/>
    </source>
</evidence>
<evidence type="ECO:0007744" key="25">
    <source>
        <dbReference type="PDB" id="7WU7"/>
    </source>
</evidence>
<evidence type="ECO:0007744" key="26">
    <source>
        <dbReference type="PDB" id="7WZ3"/>
    </source>
</evidence>
<evidence type="ECO:0007744" key="27">
    <source>
        <dbReference type="PDB" id="7X0A"/>
    </source>
</evidence>
<evidence type="ECO:0007744" key="28">
    <source>
        <dbReference type="PDB" id="7X0S"/>
    </source>
</evidence>
<evidence type="ECO:0007744" key="29">
    <source>
        <dbReference type="PDB" id="7X0V"/>
    </source>
</evidence>
<evidence type="ECO:0007744" key="30">
    <source>
        <dbReference type="PDB" id="7X3J"/>
    </source>
</evidence>
<evidence type="ECO:0007744" key="31">
    <source>
        <dbReference type="PDB" id="7X3U"/>
    </source>
</evidence>
<evidence type="ECO:0007744" key="32">
    <source>
        <dbReference type="PDB" id="7X6Q"/>
    </source>
</evidence>
<evidence type="ECO:0007744" key="33">
    <source>
        <dbReference type="PDB" id="7X7Y"/>
    </source>
</evidence>
<evidence type="ECO:0007744" key="34">
    <source>
    </source>
</evidence>
<evidence type="ECO:0007744" key="35">
    <source>
    </source>
</evidence>
<evidence type="ECO:0007744" key="36">
    <source>
    </source>
</evidence>
<evidence type="ECO:0007744" key="37">
    <source>
    </source>
</evidence>
<evidence type="ECO:0007744" key="38">
    <source>
    </source>
</evidence>
<evidence type="ECO:0007744" key="39">
    <source>
    </source>
</evidence>
<evidence type="ECO:0007744" key="40">
    <source>
    </source>
</evidence>
<evidence type="ECO:0007744" key="41">
    <source>
    </source>
</evidence>
<evidence type="ECO:0007744" key="42">
    <source>
    </source>
</evidence>
<evidence type="ECO:0007829" key="43">
    <source>
        <dbReference type="PDB" id="7NVL"/>
    </source>
</evidence>
<evidence type="ECO:0007829" key="44">
    <source>
        <dbReference type="PDB" id="7TRG"/>
    </source>
</evidence>
<evidence type="ECO:0007829" key="45">
    <source>
        <dbReference type="PDB" id="7X0S"/>
    </source>
</evidence>
<evidence type="ECO:0007829" key="46">
    <source>
        <dbReference type="PDB" id="8I9U"/>
    </source>
</evidence>
<evidence type="ECO:0007829" key="47">
    <source>
        <dbReference type="PDB" id="8SFE"/>
    </source>
</evidence>
<evidence type="ECO:0007829" key="48">
    <source>
        <dbReference type="PDB" id="8SH9"/>
    </source>
</evidence>
<gene>
    <name type="primary">CCT8</name>
    <name type="synonym">C21orf112</name>
    <name type="synonym">CCTQ</name>
    <name type="synonym">KIAA0002</name>
</gene>
<proteinExistence type="evidence at protein level"/>
<dbReference type="EC" id="3.6.1.-" evidence="14 15 16"/>
<dbReference type="EMBL" id="D13627">
    <property type="protein sequence ID" value="BAA02792.2"/>
    <property type="status" value="ALT_INIT"/>
    <property type="molecule type" value="mRNA"/>
</dbReference>
<dbReference type="EMBL" id="D42052">
    <property type="protein sequence ID" value="BAA07652.1"/>
    <property type="status" value="ALT_SEQ"/>
    <property type="molecule type" value="Genomic_DNA"/>
</dbReference>
<dbReference type="EMBL" id="AF129075">
    <property type="status" value="NOT_ANNOTATED_CDS"/>
    <property type="molecule type" value="Genomic_DNA"/>
</dbReference>
<dbReference type="EMBL" id="AK293705">
    <property type="protein sequence ID" value="BAG57138.1"/>
    <property type="molecule type" value="mRNA"/>
</dbReference>
<dbReference type="EMBL" id="AK298801">
    <property type="protein sequence ID" value="BAG60936.1"/>
    <property type="molecule type" value="mRNA"/>
</dbReference>
<dbReference type="EMBL" id="AL163249">
    <property type="protein sequence ID" value="CAB90433.1"/>
    <property type="molecule type" value="Genomic_DNA"/>
</dbReference>
<dbReference type="EMBL" id="BC072001">
    <property type="protein sequence ID" value="AAH72001.1"/>
    <property type="molecule type" value="mRNA"/>
</dbReference>
<dbReference type="EMBL" id="BC095470">
    <property type="protein sequence ID" value="AAH95470.1"/>
    <property type="molecule type" value="mRNA"/>
</dbReference>
<dbReference type="EMBL" id="Z37163">
    <property type="protein sequence ID" value="CAA85520.1"/>
    <property type="molecule type" value="mRNA"/>
</dbReference>
<dbReference type="CCDS" id="CCDS33528.1">
    <molecule id="P50990-1"/>
</dbReference>
<dbReference type="CCDS" id="CCDS68180.1">
    <molecule id="P50990-3"/>
</dbReference>
<dbReference type="CCDS" id="CCDS68181.1">
    <molecule id="P50990-2"/>
</dbReference>
<dbReference type="PIR" id="PC4021">
    <property type="entry name" value="PC4021"/>
</dbReference>
<dbReference type="RefSeq" id="NP_001269836.1">
    <molecule id="P50990-2"/>
    <property type="nucleotide sequence ID" value="NM_001282907.2"/>
</dbReference>
<dbReference type="RefSeq" id="NP_001269838.1">
    <molecule id="P50990-3"/>
    <property type="nucleotide sequence ID" value="NM_001282909.2"/>
</dbReference>
<dbReference type="RefSeq" id="NP_006576.2">
    <molecule id="P50990-1"/>
    <property type="nucleotide sequence ID" value="NM_006585.3"/>
</dbReference>
<dbReference type="RefSeq" id="XP_047296624.1">
    <molecule id="P50990-2"/>
    <property type="nucleotide sequence ID" value="XM_047440668.1"/>
</dbReference>
<dbReference type="PDB" id="6NR8">
    <property type="method" value="EM"/>
    <property type="resolution" value="7.80 A"/>
    <property type="chains" value="H/P=14-527"/>
</dbReference>
<dbReference type="PDB" id="6NR9">
    <property type="method" value="EM"/>
    <property type="resolution" value="8.50 A"/>
    <property type="chains" value="H/P=14-527"/>
</dbReference>
<dbReference type="PDB" id="6NRA">
    <property type="method" value="EM"/>
    <property type="resolution" value="7.70 A"/>
    <property type="chains" value="H/P=14-527"/>
</dbReference>
<dbReference type="PDB" id="6NRB">
    <property type="method" value="EM"/>
    <property type="resolution" value="8.70 A"/>
    <property type="chains" value="H/P=14-527"/>
</dbReference>
<dbReference type="PDB" id="6NRC">
    <property type="method" value="EM"/>
    <property type="resolution" value="8.30 A"/>
    <property type="chains" value="H/P=14-527"/>
</dbReference>
<dbReference type="PDB" id="6NRD">
    <property type="method" value="EM"/>
    <property type="resolution" value="8.20 A"/>
    <property type="chains" value="H/P=14-527"/>
</dbReference>
<dbReference type="PDB" id="6QB8">
    <property type="method" value="EM"/>
    <property type="resolution" value="3.97 A"/>
    <property type="chains" value="Q/q=1-548"/>
</dbReference>
<dbReference type="PDB" id="7LUM">
    <property type="method" value="EM"/>
    <property type="resolution" value="4.50 A"/>
    <property type="chains" value="B/J=1-548"/>
</dbReference>
<dbReference type="PDB" id="7LUP">
    <property type="method" value="EM"/>
    <property type="resolution" value="6.20 A"/>
    <property type="chains" value="B/J=1-548"/>
</dbReference>
<dbReference type="PDB" id="7NVL">
    <property type="method" value="EM"/>
    <property type="resolution" value="2.50 A"/>
    <property type="chains" value="Q/q=1-548"/>
</dbReference>
<dbReference type="PDB" id="7NVM">
    <property type="method" value="EM"/>
    <property type="resolution" value="3.10 A"/>
    <property type="chains" value="Q/q=1-548"/>
</dbReference>
<dbReference type="PDB" id="7NVN">
    <property type="method" value="EM"/>
    <property type="resolution" value="3.00 A"/>
    <property type="chains" value="Q/q=1-548"/>
</dbReference>
<dbReference type="PDB" id="7NVO">
    <property type="method" value="EM"/>
    <property type="resolution" value="3.50 A"/>
    <property type="chains" value="Q/q=1-548"/>
</dbReference>
<dbReference type="PDB" id="7TRG">
    <property type="method" value="EM"/>
    <property type="resolution" value="3.00 A"/>
    <property type="chains" value="B=1-547"/>
</dbReference>
<dbReference type="PDB" id="7TTN">
    <property type="method" value="EM"/>
    <property type="resolution" value="3.30 A"/>
    <property type="chains" value="B=1-547"/>
</dbReference>
<dbReference type="PDB" id="7TTT">
    <property type="method" value="EM"/>
    <property type="resolution" value="2.90 A"/>
    <property type="chains" value="B=1-547"/>
</dbReference>
<dbReference type="PDB" id="7TUB">
    <property type="method" value="EM"/>
    <property type="resolution" value="3.60 A"/>
    <property type="chains" value="B=1-547"/>
</dbReference>
<dbReference type="PDB" id="7WU7">
    <property type="method" value="EM"/>
    <property type="resolution" value="3.85 A"/>
    <property type="chains" value="H/P=1-547"/>
</dbReference>
<dbReference type="PDB" id="7WZ3">
    <property type="method" value="EM"/>
    <property type="resolution" value="4.10 A"/>
    <property type="chains" value="Q/q=1-548"/>
</dbReference>
<dbReference type="PDB" id="7X0A">
    <property type="method" value="EM"/>
    <property type="resolution" value="3.10 A"/>
    <property type="chains" value="Q/q=1-548"/>
</dbReference>
<dbReference type="PDB" id="7X0S">
    <property type="method" value="EM"/>
    <property type="resolution" value="3.10 A"/>
    <property type="chains" value="J/P=1-548"/>
</dbReference>
<dbReference type="PDB" id="7X0V">
    <property type="method" value="EM"/>
    <property type="resolution" value="3.20 A"/>
    <property type="chains" value="J/P=1-548"/>
</dbReference>
<dbReference type="PDB" id="7X3J">
    <property type="method" value="EM"/>
    <property type="resolution" value="4.20 A"/>
    <property type="chains" value="Q/q=1-548"/>
</dbReference>
<dbReference type="PDB" id="7X3U">
    <property type="method" value="EM"/>
    <property type="resolution" value="3.30 A"/>
    <property type="chains" value="Q/q=1-548"/>
</dbReference>
<dbReference type="PDB" id="7X6Q">
    <property type="method" value="EM"/>
    <property type="resolution" value="4.50 A"/>
    <property type="chains" value="J/P=1-548"/>
</dbReference>
<dbReference type="PDB" id="7X7Y">
    <property type="method" value="EM"/>
    <property type="resolution" value="3.80 A"/>
    <property type="chains" value="Q/q=1-548"/>
</dbReference>
<dbReference type="PDB" id="8HKI">
    <property type="method" value="EM"/>
    <property type="resolution" value="3.10 A"/>
    <property type="chains" value="Q/q=1-548"/>
</dbReference>
<dbReference type="PDB" id="8I1U">
    <property type="method" value="EM"/>
    <property type="resolution" value="3.24 A"/>
    <property type="chains" value="H/P=1-548"/>
</dbReference>
<dbReference type="PDB" id="8I9U">
    <property type="method" value="EM"/>
    <property type="resolution" value="3.10 A"/>
    <property type="chains" value="H/P=1-548"/>
</dbReference>
<dbReference type="PDB" id="8IB8">
    <property type="method" value="EM"/>
    <property type="resolution" value="4.42 A"/>
    <property type="chains" value="H/P=1-548"/>
</dbReference>
<dbReference type="PDB" id="8SFE">
    <property type="method" value="EM"/>
    <property type="resolution" value="3.36 A"/>
    <property type="chains" value="Q/q=2-539"/>
</dbReference>
<dbReference type="PDB" id="8SFF">
    <property type="method" value="EM"/>
    <property type="resolution" value="3.20 A"/>
    <property type="chains" value="Q/q=2-539"/>
</dbReference>
<dbReference type="PDB" id="8SG8">
    <property type="method" value="EM"/>
    <property type="resolution" value="3.00 A"/>
    <property type="chains" value="Q/q=2-539"/>
</dbReference>
<dbReference type="PDB" id="8SG9">
    <property type="method" value="EM"/>
    <property type="resolution" value="2.90 A"/>
    <property type="chains" value="Q/q=2-539"/>
</dbReference>
<dbReference type="PDB" id="8SGC">
    <property type="method" value="EM"/>
    <property type="resolution" value="2.90 A"/>
    <property type="chains" value="Q/q=2-539"/>
</dbReference>
<dbReference type="PDB" id="8SGL">
    <property type="method" value="EM"/>
    <property type="resolution" value="2.90 A"/>
    <property type="chains" value="Q/q=2-539"/>
</dbReference>
<dbReference type="PDB" id="8SGQ">
    <property type="method" value="EM"/>
    <property type="resolution" value="3.70 A"/>
    <property type="chains" value="Q/q=29-526"/>
</dbReference>
<dbReference type="PDB" id="8SH9">
    <property type="method" value="EM"/>
    <property type="resolution" value="2.70 A"/>
    <property type="chains" value="Q/q=2-539"/>
</dbReference>
<dbReference type="PDB" id="8SHA">
    <property type="method" value="EM"/>
    <property type="resolution" value="3.00 A"/>
    <property type="chains" value="Q/q=2-539"/>
</dbReference>
<dbReference type="PDB" id="8SHD">
    <property type="method" value="EM"/>
    <property type="resolution" value="2.90 A"/>
    <property type="chains" value="Q/q=2-539"/>
</dbReference>
<dbReference type="PDB" id="8SHE">
    <property type="method" value="EM"/>
    <property type="resolution" value="2.80 A"/>
    <property type="chains" value="Q/q=2-539"/>
</dbReference>
<dbReference type="PDB" id="8SHF">
    <property type="method" value="EM"/>
    <property type="resolution" value="3.00 A"/>
    <property type="chains" value="Q/q=2-539"/>
</dbReference>
<dbReference type="PDB" id="8SHG">
    <property type="method" value="EM"/>
    <property type="resolution" value="2.80 A"/>
    <property type="chains" value="Q/q=2-539"/>
</dbReference>
<dbReference type="PDB" id="8SHL">
    <property type="method" value="EM"/>
    <property type="resolution" value="3.00 A"/>
    <property type="chains" value="Q/q=2-539"/>
</dbReference>
<dbReference type="PDB" id="8SHN">
    <property type="method" value="EM"/>
    <property type="resolution" value="2.80 A"/>
    <property type="chains" value="Q/q=2-539"/>
</dbReference>
<dbReference type="PDB" id="8SHO">
    <property type="method" value="EM"/>
    <property type="resolution" value="3.00 A"/>
    <property type="chains" value="Q/q=2-539"/>
</dbReference>
<dbReference type="PDB" id="8SHP">
    <property type="method" value="EM"/>
    <property type="resolution" value="3.00 A"/>
    <property type="chains" value="Q/q=2-539"/>
</dbReference>
<dbReference type="PDB" id="8SHQ">
    <property type="method" value="EM"/>
    <property type="resolution" value="2.90 A"/>
    <property type="chains" value="Q/q=2-539"/>
</dbReference>
<dbReference type="PDB" id="8SHT">
    <property type="method" value="EM"/>
    <property type="resolution" value="3.00 A"/>
    <property type="chains" value="Q/q=2-539"/>
</dbReference>
<dbReference type="PDBsum" id="6NR8"/>
<dbReference type="PDBsum" id="6NR9"/>
<dbReference type="PDBsum" id="6NRA"/>
<dbReference type="PDBsum" id="6NRB"/>
<dbReference type="PDBsum" id="6NRC"/>
<dbReference type="PDBsum" id="6NRD"/>
<dbReference type="PDBsum" id="6QB8"/>
<dbReference type="PDBsum" id="7LUM"/>
<dbReference type="PDBsum" id="7LUP"/>
<dbReference type="PDBsum" id="7NVL"/>
<dbReference type="PDBsum" id="7NVM"/>
<dbReference type="PDBsum" id="7NVN"/>
<dbReference type="PDBsum" id="7NVO"/>
<dbReference type="PDBsum" id="7TRG"/>
<dbReference type="PDBsum" id="7TTN"/>
<dbReference type="PDBsum" id="7TTT"/>
<dbReference type="PDBsum" id="7TUB"/>
<dbReference type="PDBsum" id="7WU7"/>
<dbReference type="PDBsum" id="7WZ3"/>
<dbReference type="PDBsum" id="7X0A"/>
<dbReference type="PDBsum" id="7X0S"/>
<dbReference type="PDBsum" id="7X0V"/>
<dbReference type="PDBsum" id="7X3J"/>
<dbReference type="PDBsum" id="7X3U"/>
<dbReference type="PDBsum" id="7X6Q"/>
<dbReference type="PDBsum" id="7X7Y"/>
<dbReference type="PDBsum" id="8HKI"/>
<dbReference type="PDBsum" id="8I1U"/>
<dbReference type="PDBsum" id="8I9U"/>
<dbReference type="PDBsum" id="8IB8"/>
<dbReference type="PDBsum" id="8SFE"/>
<dbReference type="PDBsum" id="8SFF"/>
<dbReference type="PDBsum" id="8SG8"/>
<dbReference type="PDBsum" id="8SG9"/>
<dbReference type="PDBsum" id="8SGC"/>
<dbReference type="PDBsum" id="8SGL"/>
<dbReference type="PDBsum" id="8SGQ"/>
<dbReference type="PDBsum" id="8SH9"/>
<dbReference type="PDBsum" id="8SHA"/>
<dbReference type="PDBsum" id="8SHD"/>
<dbReference type="PDBsum" id="8SHE"/>
<dbReference type="PDBsum" id="8SHF"/>
<dbReference type="PDBsum" id="8SHG"/>
<dbReference type="PDBsum" id="8SHL"/>
<dbReference type="PDBsum" id="8SHN"/>
<dbReference type="PDBsum" id="8SHO"/>
<dbReference type="PDBsum" id="8SHP"/>
<dbReference type="PDBsum" id="8SHQ"/>
<dbReference type="PDBsum" id="8SHT"/>
<dbReference type="EMDB" id="EMD-0490"/>
<dbReference type="EMDB" id="EMD-0491"/>
<dbReference type="EMDB" id="EMD-0492"/>
<dbReference type="EMDB" id="EMD-0493"/>
<dbReference type="EMDB" id="EMD-0494"/>
<dbReference type="EMDB" id="EMD-0495"/>
<dbReference type="EMDB" id="EMD-12605"/>
<dbReference type="EMDB" id="EMD-12606"/>
<dbReference type="EMDB" id="EMD-12607"/>
<dbReference type="EMDB" id="EMD-12608"/>
<dbReference type="EMDB" id="EMD-13754"/>
<dbReference type="EMDB" id="EMD-23522"/>
<dbReference type="EMDB" id="EMD-23526"/>
<dbReference type="EMDB" id="EMD-26089"/>
<dbReference type="EMDB" id="EMD-26120"/>
<dbReference type="EMDB" id="EMD-26123"/>
<dbReference type="EMDB" id="EMD-26131"/>
<dbReference type="EMDB" id="EMD-32823"/>
<dbReference type="EMDB" id="EMD-32903"/>
<dbReference type="EMDB" id="EMD-32922"/>
<dbReference type="EMDB" id="EMD-32923"/>
<dbReference type="EMDB" id="EMD-32926"/>
<dbReference type="EMDB" id="EMD-32989"/>
<dbReference type="EMDB" id="EMD-32993"/>
<dbReference type="EMDB" id="EMD-33025"/>
<dbReference type="EMDB" id="EMD-33053"/>
<dbReference type="EMDB" id="EMD-34852"/>
<dbReference type="EMDB" id="EMD-35122"/>
<dbReference type="EMDB" id="EMD-35284"/>
<dbReference type="EMDB" id="EMD-35335"/>
<dbReference type="EMDB" id="EMD-40439"/>
<dbReference type="EMDB" id="EMD-40440"/>
<dbReference type="EMDB" id="EMD-40452"/>
<dbReference type="EMDB" id="EMD-40453"/>
<dbReference type="EMDB" id="EMD-40454"/>
<dbReference type="EMDB" id="EMD-40461"/>
<dbReference type="EMDB" id="EMD-40464"/>
<dbReference type="EMDB" id="EMD-40481"/>
<dbReference type="EMDB" id="EMD-40482"/>
<dbReference type="EMDB" id="EMD-40484"/>
<dbReference type="EMDB" id="EMD-40485"/>
<dbReference type="EMDB" id="EMD-40486"/>
<dbReference type="EMDB" id="EMD-40487"/>
<dbReference type="EMDB" id="EMD-40488"/>
<dbReference type="EMDB" id="EMD-40489"/>
<dbReference type="EMDB" id="EMD-40490"/>
<dbReference type="EMDB" id="EMD-40491"/>
<dbReference type="EMDB" id="EMD-40492"/>
<dbReference type="EMDB" id="EMD-40494"/>
<dbReference type="EMDB" id="EMD-4489"/>
<dbReference type="SMR" id="P50990"/>
<dbReference type="BioGRID" id="115933">
    <property type="interactions" value="648"/>
</dbReference>
<dbReference type="ComplexPortal" id="CPX-6030">
    <property type="entry name" value="Chaperonin-containing T-complex"/>
</dbReference>
<dbReference type="CORUM" id="P50990"/>
<dbReference type="DIP" id="DIP-38124N"/>
<dbReference type="FunCoup" id="P50990">
    <property type="interactions" value="3818"/>
</dbReference>
<dbReference type="IntAct" id="P50990">
    <property type="interactions" value="268"/>
</dbReference>
<dbReference type="MINT" id="P50990"/>
<dbReference type="STRING" id="9606.ENSP00000286788"/>
<dbReference type="ChEMBL" id="CHEMBL4295775"/>
<dbReference type="GlyGen" id="P50990">
    <property type="glycosylation" value="2 sites, 1 O-linked glycan (2 sites)"/>
</dbReference>
<dbReference type="iPTMnet" id="P50990"/>
<dbReference type="MetOSite" id="P50990"/>
<dbReference type="PhosphoSitePlus" id="P50990"/>
<dbReference type="SwissPalm" id="P50990"/>
<dbReference type="BioMuta" id="CCT8"/>
<dbReference type="DMDM" id="9988062"/>
<dbReference type="OGP" id="P50990"/>
<dbReference type="REPRODUCTION-2DPAGE" id="IPI00784090"/>
<dbReference type="REPRODUCTION-2DPAGE" id="P50990"/>
<dbReference type="CPTAC" id="CPTAC-331"/>
<dbReference type="CPTAC" id="CPTAC-332"/>
<dbReference type="jPOST" id="P50990"/>
<dbReference type="MassIVE" id="P50990"/>
<dbReference type="PaxDb" id="9606-ENSP00000286788"/>
<dbReference type="PeptideAtlas" id="P50990"/>
<dbReference type="PRIDE" id="P50990"/>
<dbReference type="ProteomicsDB" id="3972"/>
<dbReference type="ProteomicsDB" id="4872"/>
<dbReference type="ProteomicsDB" id="56272">
    <molecule id="P50990-1"/>
</dbReference>
<dbReference type="Pumba" id="P50990"/>
<dbReference type="TopDownProteomics" id="P50990-1">
    <molecule id="P50990-1"/>
</dbReference>
<dbReference type="Antibodypedia" id="6409">
    <property type="antibodies" value="298 antibodies from 32 providers"/>
</dbReference>
<dbReference type="DNASU" id="10694"/>
<dbReference type="Ensembl" id="ENST00000286788.9">
    <molecule id="P50990-1"/>
    <property type="protein sequence ID" value="ENSP00000286788.4"/>
    <property type="gene ID" value="ENSG00000156261.13"/>
</dbReference>
<dbReference type="Ensembl" id="ENST00000540844.5">
    <molecule id="P50990-3"/>
    <property type="protein sequence ID" value="ENSP00000442730.1"/>
    <property type="gene ID" value="ENSG00000156261.13"/>
</dbReference>
<dbReference type="Ensembl" id="ENST00000626972.2">
    <molecule id="P50990-2"/>
    <property type="protein sequence ID" value="ENSP00000486921.1"/>
    <property type="gene ID" value="ENSG00000156261.13"/>
</dbReference>
<dbReference type="Ensembl" id="ENST00000707884.1">
    <molecule id="P50990-1"/>
    <property type="protein sequence ID" value="ENSP00000517017.1"/>
    <property type="gene ID" value="ENSG00000291533.1"/>
</dbReference>
<dbReference type="Ensembl" id="ENST00000707885.1">
    <molecule id="P50990-2"/>
    <property type="protein sequence ID" value="ENSP00000517018.1"/>
    <property type="gene ID" value="ENSG00000291533.1"/>
</dbReference>
<dbReference type="Ensembl" id="ENST00000707892.1">
    <molecule id="P50990-3"/>
    <property type="protein sequence ID" value="ENSP00000517020.1"/>
    <property type="gene ID" value="ENSG00000291533.1"/>
</dbReference>
<dbReference type="GeneID" id="10694"/>
<dbReference type="KEGG" id="hsa:10694"/>
<dbReference type="MANE-Select" id="ENST00000286788.9">
    <property type="protein sequence ID" value="ENSP00000286788.4"/>
    <property type="RefSeq nucleotide sequence ID" value="NM_006585.4"/>
    <property type="RefSeq protein sequence ID" value="NP_006576.2"/>
</dbReference>
<dbReference type="UCSC" id="uc002ynb.5">
    <molecule id="P50990-1"/>
    <property type="organism name" value="human"/>
</dbReference>
<dbReference type="AGR" id="HGNC:1623"/>
<dbReference type="CTD" id="10694"/>
<dbReference type="DisGeNET" id="10694"/>
<dbReference type="GeneCards" id="CCT8"/>
<dbReference type="HGNC" id="HGNC:1623">
    <property type="gene designation" value="CCT8"/>
</dbReference>
<dbReference type="HPA" id="ENSG00000156261">
    <property type="expression patterns" value="Low tissue specificity"/>
</dbReference>
<dbReference type="MIM" id="617786">
    <property type="type" value="gene"/>
</dbReference>
<dbReference type="neXtProt" id="NX_P50990"/>
<dbReference type="OpenTargets" id="ENSG00000156261"/>
<dbReference type="PharmGKB" id="PA26186"/>
<dbReference type="VEuPathDB" id="HostDB:ENSG00000156261"/>
<dbReference type="eggNOG" id="KOG0362">
    <property type="taxonomic scope" value="Eukaryota"/>
</dbReference>
<dbReference type="GeneTree" id="ENSGT00550000074783"/>
<dbReference type="InParanoid" id="P50990"/>
<dbReference type="OMA" id="WGLKYAV"/>
<dbReference type="OrthoDB" id="1748577at2759"/>
<dbReference type="PAN-GO" id="P50990">
    <property type="GO annotations" value="3 GO annotations based on evolutionary models"/>
</dbReference>
<dbReference type="PhylomeDB" id="P50990"/>
<dbReference type="TreeFam" id="TF105699"/>
<dbReference type="BRENDA" id="3.6.4.B10">
    <property type="organism ID" value="2681"/>
</dbReference>
<dbReference type="PathwayCommons" id="P50990"/>
<dbReference type="Reactome" id="R-HSA-389957">
    <property type="pathway name" value="Prefoldin mediated transfer of substrate to CCT/TriC"/>
</dbReference>
<dbReference type="Reactome" id="R-HSA-389960">
    <property type="pathway name" value="Formation of tubulin folding intermediates by CCT/TriC"/>
</dbReference>
<dbReference type="Reactome" id="R-HSA-390450">
    <property type="pathway name" value="Folding of actin by CCT/TriC"/>
</dbReference>
<dbReference type="Reactome" id="R-HSA-390471">
    <property type="pathway name" value="Association of TriC/CCT with target proteins during biosynthesis"/>
</dbReference>
<dbReference type="Reactome" id="R-HSA-5620922">
    <property type="pathway name" value="BBSome-mediated cargo-targeting to cilium"/>
</dbReference>
<dbReference type="Reactome" id="R-HSA-6798695">
    <property type="pathway name" value="Neutrophil degranulation"/>
</dbReference>
<dbReference type="Reactome" id="R-HSA-6814122">
    <property type="pathway name" value="Cooperation of PDCL (PhLP1) and TRiC/CCT in G-protein beta folding"/>
</dbReference>
<dbReference type="SignaLink" id="P50990"/>
<dbReference type="SIGNOR" id="P50990"/>
<dbReference type="BioGRID-ORCS" id="10694">
    <property type="hits" value="807 hits in 1135 CRISPR screens"/>
</dbReference>
<dbReference type="CD-CODE" id="91857CE7">
    <property type="entry name" value="Nucleolus"/>
</dbReference>
<dbReference type="CD-CODE" id="FB4E32DD">
    <property type="entry name" value="Presynaptic clusters and postsynaptic densities"/>
</dbReference>
<dbReference type="ChiTaRS" id="CCT8">
    <property type="organism name" value="human"/>
</dbReference>
<dbReference type="GeneWiki" id="CCT8"/>
<dbReference type="GenomeRNAi" id="10694"/>
<dbReference type="Pharos" id="P50990">
    <property type="development level" value="Tbio"/>
</dbReference>
<dbReference type="PRO" id="PR:P50990"/>
<dbReference type="Proteomes" id="UP000005640">
    <property type="component" value="Chromosome 21"/>
</dbReference>
<dbReference type="RNAct" id="P50990">
    <property type="molecule type" value="protein"/>
</dbReference>
<dbReference type="Bgee" id="ENSG00000156261">
    <property type="expression patterns" value="Expressed in oocyte and 217 other cell types or tissues"/>
</dbReference>
<dbReference type="ExpressionAtlas" id="P50990">
    <property type="expression patterns" value="baseline and differential"/>
</dbReference>
<dbReference type="GO" id="GO:0035578">
    <property type="term" value="C:azurophil granule lumen"/>
    <property type="evidence" value="ECO:0000304"/>
    <property type="project" value="Reactome"/>
</dbReference>
<dbReference type="GO" id="GO:0044297">
    <property type="term" value="C:cell body"/>
    <property type="evidence" value="ECO:0007669"/>
    <property type="project" value="Ensembl"/>
</dbReference>
<dbReference type="GO" id="GO:0005813">
    <property type="term" value="C:centrosome"/>
    <property type="evidence" value="ECO:0000314"/>
    <property type="project" value="MGI"/>
</dbReference>
<dbReference type="GO" id="GO:0005832">
    <property type="term" value="C:chaperonin-containing T-complex"/>
    <property type="evidence" value="ECO:0000314"/>
    <property type="project" value="UniProtKB"/>
</dbReference>
<dbReference type="GO" id="GO:0005929">
    <property type="term" value="C:cilium"/>
    <property type="evidence" value="ECO:0007669"/>
    <property type="project" value="UniProtKB-KW"/>
</dbReference>
<dbReference type="GO" id="GO:0005737">
    <property type="term" value="C:cytoplasm"/>
    <property type="evidence" value="ECO:0000314"/>
    <property type="project" value="BHF-UCL"/>
</dbReference>
<dbReference type="GO" id="GO:0005829">
    <property type="term" value="C:cytosol"/>
    <property type="evidence" value="ECO:0007005"/>
    <property type="project" value="UniProtKB"/>
</dbReference>
<dbReference type="GO" id="GO:0070062">
    <property type="term" value="C:extracellular exosome"/>
    <property type="evidence" value="ECO:0007005"/>
    <property type="project" value="UniProtKB"/>
</dbReference>
<dbReference type="GO" id="GO:0005576">
    <property type="term" value="C:extracellular region"/>
    <property type="evidence" value="ECO:0000304"/>
    <property type="project" value="Reactome"/>
</dbReference>
<dbReference type="GO" id="GO:1904813">
    <property type="term" value="C:ficolin-1-rich granule lumen"/>
    <property type="evidence" value="ECO:0000304"/>
    <property type="project" value="Reactome"/>
</dbReference>
<dbReference type="GO" id="GO:0005874">
    <property type="term" value="C:microtubule"/>
    <property type="evidence" value="ECO:0000314"/>
    <property type="project" value="UniProtKB"/>
</dbReference>
<dbReference type="GO" id="GO:0034774">
    <property type="term" value="C:secretory granule lumen"/>
    <property type="evidence" value="ECO:0000304"/>
    <property type="project" value="Reactome"/>
</dbReference>
<dbReference type="GO" id="GO:0002199">
    <property type="term" value="C:zona pellucida receptor complex"/>
    <property type="evidence" value="ECO:0007669"/>
    <property type="project" value="Ensembl"/>
</dbReference>
<dbReference type="GO" id="GO:0005524">
    <property type="term" value="F:ATP binding"/>
    <property type="evidence" value="ECO:0007669"/>
    <property type="project" value="UniProtKB-KW"/>
</dbReference>
<dbReference type="GO" id="GO:0016887">
    <property type="term" value="F:ATP hydrolysis activity"/>
    <property type="evidence" value="ECO:0007669"/>
    <property type="project" value="InterPro"/>
</dbReference>
<dbReference type="GO" id="GO:0140662">
    <property type="term" value="F:ATP-dependent protein folding chaperone"/>
    <property type="evidence" value="ECO:0007669"/>
    <property type="project" value="InterPro"/>
</dbReference>
<dbReference type="GO" id="GO:0045296">
    <property type="term" value="F:cadherin binding"/>
    <property type="evidence" value="ECO:0007005"/>
    <property type="project" value="BHF-UCL"/>
</dbReference>
<dbReference type="GO" id="GO:0044183">
    <property type="term" value="F:protein folding chaperone"/>
    <property type="evidence" value="ECO:0000314"/>
    <property type="project" value="BHF-UCL"/>
</dbReference>
<dbReference type="GO" id="GO:0051082">
    <property type="term" value="F:unfolded protein binding"/>
    <property type="evidence" value="ECO:0000318"/>
    <property type="project" value="GO_Central"/>
</dbReference>
<dbReference type="GO" id="GO:0007339">
    <property type="term" value="P:binding of sperm to zona pellucida"/>
    <property type="evidence" value="ECO:0007669"/>
    <property type="project" value="Ensembl"/>
</dbReference>
<dbReference type="GO" id="GO:0051086">
    <property type="term" value="P:chaperone mediated protein folding independent of cofactor"/>
    <property type="evidence" value="ECO:0000315"/>
    <property type="project" value="BHF-UCL"/>
</dbReference>
<dbReference type="GO" id="GO:0061077">
    <property type="term" value="P:chaperone-mediated protein folding"/>
    <property type="evidence" value="ECO:0000314"/>
    <property type="project" value="ComplexPortal"/>
</dbReference>
<dbReference type="GO" id="GO:1904871">
    <property type="term" value="P:positive regulation of protein localization to Cajal body"/>
    <property type="evidence" value="ECO:0007001"/>
    <property type="project" value="BHF-UCL"/>
</dbReference>
<dbReference type="GO" id="GO:1904874">
    <property type="term" value="P:positive regulation of telomerase RNA localization to Cajal body"/>
    <property type="evidence" value="ECO:0007001"/>
    <property type="project" value="BHF-UCL"/>
</dbReference>
<dbReference type="GO" id="GO:0032212">
    <property type="term" value="P:positive regulation of telomere maintenance via telomerase"/>
    <property type="evidence" value="ECO:0000315"/>
    <property type="project" value="BHF-UCL"/>
</dbReference>
<dbReference type="GO" id="GO:0006457">
    <property type="term" value="P:protein folding"/>
    <property type="evidence" value="ECO:0000314"/>
    <property type="project" value="FlyBase"/>
</dbReference>
<dbReference type="GO" id="GO:0050821">
    <property type="term" value="P:protein stabilization"/>
    <property type="evidence" value="ECO:0000315"/>
    <property type="project" value="BHF-UCL"/>
</dbReference>
<dbReference type="CDD" id="cd03341">
    <property type="entry name" value="TCP1_theta"/>
    <property type="match status" value="1"/>
</dbReference>
<dbReference type="FunFam" id="1.10.560.10:FF:000083">
    <property type="entry name" value="T-complex protein 1 subunit theta"/>
    <property type="match status" value="1"/>
</dbReference>
<dbReference type="FunFam" id="3.50.7.10:FF:000008">
    <property type="entry name" value="T-complex protein 1 subunit theta"/>
    <property type="match status" value="1"/>
</dbReference>
<dbReference type="Gene3D" id="3.50.7.10">
    <property type="entry name" value="GroEL"/>
    <property type="match status" value="1"/>
</dbReference>
<dbReference type="Gene3D" id="1.10.560.10">
    <property type="entry name" value="GroEL-like equatorial domain"/>
    <property type="match status" value="1"/>
</dbReference>
<dbReference type="Gene3D" id="3.30.260.10">
    <property type="entry name" value="TCP-1-like chaperonin intermediate domain"/>
    <property type="match status" value="1"/>
</dbReference>
<dbReference type="InterPro" id="IPR012721">
    <property type="entry name" value="Chap_CCT_theta"/>
</dbReference>
<dbReference type="InterPro" id="IPR017998">
    <property type="entry name" value="Chaperone_TCP-1"/>
</dbReference>
<dbReference type="InterPro" id="IPR002194">
    <property type="entry name" value="Chaperonin_TCP-1_CS"/>
</dbReference>
<dbReference type="InterPro" id="IPR002423">
    <property type="entry name" value="Cpn60/GroEL/TCP-1"/>
</dbReference>
<dbReference type="InterPro" id="IPR027409">
    <property type="entry name" value="GroEL-like_apical_dom_sf"/>
</dbReference>
<dbReference type="InterPro" id="IPR027413">
    <property type="entry name" value="GROEL-like_equatorial_sf"/>
</dbReference>
<dbReference type="InterPro" id="IPR027410">
    <property type="entry name" value="TCP-1-like_intermed_sf"/>
</dbReference>
<dbReference type="NCBIfam" id="TIGR02346">
    <property type="entry name" value="chap_CCT_theta"/>
    <property type="match status" value="1"/>
</dbReference>
<dbReference type="PANTHER" id="PTHR11353">
    <property type="entry name" value="CHAPERONIN"/>
    <property type="match status" value="1"/>
</dbReference>
<dbReference type="Pfam" id="PF00118">
    <property type="entry name" value="Cpn60_TCP1"/>
    <property type="match status" value="1"/>
</dbReference>
<dbReference type="PRINTS" id="PR00304">
    <property type="entry name" value="TCOMPLEXTCP1"/>
</dbReference>
<dbReference type="SUPFAM" id="SSF52029">
    <property type="entry name" value="GroEL apical domain-like"/>
    <property type="match status" value="1"/>
</dbReference>
<dbReference type="SUPFAM" id="SSF48592">
    <property type="entry name" value="GroEL equatorial domain-like"/>
    <property type="match status" value="1"/>
</dbReference>
<dbReference type="SUPFAM" id="SSF54849">
    <property type="entry name" value="GroEL-intermediate domain like"/>
    <property type="match status" value="1"/>
</dbReference>
<dbReference type="PROSITE" id="PS00750">
    <property type="entry name" value="TCP1_1"/>
    <property type="match status" value="1"/>
</dbReference>
<dbReference type="PROSITE" id="PS00751">
    <property type="entry name" value="TCP1_2"/>
    <property type="match status" value="1"/>
</dbReference>
<dbReference type="PROSITE" id="PS00995">
    <property type="entry name" value="TCP1_3"/>
    <property type="match status" value="1"/>
</dbReference>
<organism>
    <name type="scientific">Homo sapiens</name>
    <name type="common">Human</name>
    <dbReference type="NCBI Taxonomy" id="9606"/>
    <lineage>
        <taxon>Eukaryota</taxon>
        <taxon>Metazoa</taxon>
        <taxon>Chordata</taxon>
        <taxon>Craniata</taxon>
        <taxon>Vertebrata</taxon>
        <taxon>Euteleostomi</taxon>
        <taxon>Mammalia</taxon>
        <taxon>Eutheria</taxon>
        <taxon>Euarchontoglires</taxon>
        <taxon>Primates</taxon>
        <taxon>Haplorrhini</taxon>
        <taxon>Catarrhini</taxon>
        <taxon>Hominidae</taxon>
        <taxon>Homo</taxon>
    </lineage>
</organism>
<comment type="function">
    <text evidence="5 6 7 8 9">Component of the chaperonin-containing T-complex (TRiC), a molecular chaperone complex that assists the folding of actin, tubulin and other proteins upon ATP hydrolysis (PubMed:25467444, PubMed:36493755, PubMed:35449234, PubMed:37193829). The TRiC complex mediates the folding of WRAP53/TCAB1, thereby regulating telomere maintenance (PubMed:25467444). As part of the TRiC complex may play a role in the assembly of BBSome, a complex involved in ciliogenesis regulating transports vesicles to the cilia (PubMed:20080638).</text>
</comment>
<comment type="catalytic activity">
    <reaction evidence="14 15 16">
        <text>ATP + H2O = ADP + phosphate + H(+)</text>
        <dbReference type="Rhea" id="RHEA:13065"/>
        <dbReference type="ChEBI" id="CHEBI:15377"/>
        <dbReference type="ChEBI" id="CHEBI:15378"/>
        <dbReference type="ChEBI" id="CHEBI:30616"/>
        <dbReference type="ChEBI" id="CHEBI:43474"/>
        <dbReference type="ChEBI" id="CHEBI:456216"/>
    </reaction>
</comment>
<comment type="subunit">
    <text evidence="1 3 5 6 7 8 9">Component of the chaperonin-containing T-complex (TRiC), a hexadecamer composed of two identical back-to-back stacked rings enclosing a protein folding chamber (PubMed:20080638, PubMed:25467444, PubMed:36493755, PubMed:35449234, PubMed:37193829). Each ring is made up of eight different subunits: TCP1/CCT1, CCT2, CCT3, CCT4, CCT5, CCT6A/CCT6, CCT7, CCT8 (PubMed:36493755, PubMed:35449234, PubMed:37193829). Interacts with PACRG (PubMed:14532270). Interacts with DNAAF4 (By similarity). Interacts with synaptic plasticity regulator PANTS (By similarity).</text>
</comment>
<comment type="interaction">
    <interactant intactId="EBI-356507">
        <id>P50990</id>
    </interactant>
    <interactant intactId="EBI-10988864">
        <id>P46379-2</id>
        <label>BAG6</label>
    </interactant>
    <organismsDiffer>false</organismsDiffer>
    <experiments>3</experiments>
</comment>
<comment type="interaction">
    <interactant intactId="EBI-356507">
        <id>P50990</id>
    </interactant>
    <interactant intactId="EBI-741210">
        <id>Q0VDD7</id>
        <label>BRME1</label>
    </interactant>
    <organismsDiffer>false</organismsDiffer>
    <experiments>3</experiments>
</comment>
<comment type="interaction">
    <interactant intactId="EBI-356507">
        <id>P50990</id>
    </interactant>
    <interactant intactId="EBI-356687">
        <id>P40227</id>
        <label>CCT6A</label>
    </interactant>
    <organismsDiffer>false</organismsDiffer>
    <experiments>6</experiments>
</comment>
<comment type="interaction">
    <interactant intactId="EBI-356507">
        <id>P50990</id>
    </interactant>
    <interactant intactId="EBI-12143631">
        <id>Q6ZTQ4</id>
        <label>CDHR3</label>
    </interactant>
    <organismsDiffer>false</organismsDiffer>
    <experiments>3</experiments>
</comment>
<comment type="interaction">
    <interactant intactId="EBI-356507">
        <id>P50990</id>
    </interactant>
    <interactant intactId="EBI-466029">
        <id>P42858</id>
        <label>HTT</label>
    </interactant>
    <organismsDiffer>false</organismsDiffer>
    <experiments>4</experiments>
</comment>
<comment type="interaction">
    <interactant intactId="EBI-356507">
        <id>P50990</id>
    </interactant>
    <interactant intactId="EBI-6447163">
        <id>Q8N7X4</id>
        <label>MAGEB6</label>
    </interactant>
    <organismsDiffer>false</organismsDiffer>
    <experiments>3</experiments>
</comment>
<comment type="interaction">
    <interactant intactId="EBI-356507">
        <id>P50990</id>
    </interactant>
    <interactant intactId="EBI-1752602">
        <id>Q9UMY4</id>
        <label>SNX12</label>
    </interactant>
    <organismsDiffer>false</organismsDiffer>
    <experiments>3</experiments>
</comment>
<comment type="interaction">
    <interactant intactId="EBI-356507">
        <id>P50990</id>
    </interactant>
    <interactant intactId="EBI-356553">
        <id>P17987</id>
        <label>TCP1</label>
    </interactant>
    <organismsDiffer>false</organismsDiffer>
    <experiments>3</experiments>
</comment>
<comment type="interaction">
    <interactant intactId="EBI-356507">
        <id>P50990</id>
    </interactant>
    <interactant intactId="EBI-25895616">
        <id>P68363-2</id>
        <label>TUBA1B</label>
    </interactant>
    <organismsDiffer>false</organismsDiffer>
    <experiments>3</experiments>
</comment>
<comment type="subcellular location">
    <subcellularLocation>
        <location evidence="5">Cytoplasm</location>
    </subcellularLocation>
    <subcellularLocation>
        <location evidence="4 5">Cytoplasm</location>
        <location evidence="4 5">Cytoskeleton</location>
        <location evidence="4 5">Microtubule organizing center</location>
        <location evidence="4 5">Centrosome</location>
    </subcellularLocation>
    <subcellularLocation>
        <location evidence="1">Cytoplasm</location>
        <location evidence="1">Cytoskeleton</location>
        <location evidence="1">Cilium basal body</location>
    </subcellularLocation>
</comment>
<comment type="alternative products">
    <event type="alternative splicing"/>
    <isoform>
        <id>P50990-1</id>
        <name>1</name>
        <sequence type="displayed"/>
    </isoform>
    <isoform>
        <id>P50990-2</id>
        <name>2</name>
        <sequence type="described" ref="VSP_054692"/>
    </isoform>
    <isoform>
        <id>P50990-3</id>
        <name>3</name>
        <sequence type="described" ref="VSP_054691"/>
    </isoform>
</comment>
<comment type="disease">
    <text evidence="10">De novo genetic variants in nearly every subunit of the TRiC complex, including CCT8, have been found in individuals with a broad spectrum of brain malformations, and clinical phenotypes ranging from mild to severe epilepsy, developmental delay, intellectual disability, ataxia, and other features of cerebral malfunction.</text>
</comment>
<comment type="similarity">
    <text evidence="13">Belongs to the TCP-1 chaperonin family.</text>
</comment>
<comment type="sequence caution" evidence="13">
    <conflict type="erroneous initiation">
        <sequence resource="EMBL-CDS" id="BAA02792"/>
    </conflict>
</comment>
<keyword id="KW-0002">3D-structure</keyword>
<keyword id="KW-0007">Acetylation</keyword>
<keyword id="KW-0025">Alternative splicing</keyword>
<keyword id="KW-0067">ATP-binding</keyword>
<keyword id="KW-0966">Cell projection</keyword>
<keyword id="KW-0143">Chaperone</keyword>
<keyword id="KW-0969">Cilium</keyword>
<keyword id="KW-0963">Cytoplasm</keyword>
<keyword id="KW-0206">Cytoskeleton</keyword>
<keyword id="KW-0903">Direct protein sequencing</keyword>
<keyword id="KW-0378">Hydrolase</keyword>
<keyword id="KW-1017">Isopeptide bond</keyword>
<keyword id="KW-0547">Nucleotide-binding</keyword>
<keyword id="KW-0597">Phosphoprotein</keyword>
<keyword id="KW-1267">Proteomics identification</keyword>
<keyword id="KW-1185">Reference proteome</keyword>
<keyword id="KW-0832">Ubl conjugation</keyword>
<feature type="initiator methionine" description="Removed" evidence="11">
    <location>
        <position position="1"/>
    </location>
</feature>
<feature type="chain" id="PRO_0000128373" description="T-complex protein 1 subunit theta">
    <location>
        <begin position="2"/>
        <end position="548"/>
    </location>
</feature>
<feature type="region of interest" description="Disordered" evidence="2">
    <location>
        <begin position="529"/>
        <end position="548"/>
    </location>
</feature>
<feature type="binding site" evidence="7 8 9 17 18 19 20 21 23 24 28 29 31">
    <location>
        <position position="47"/>
    </location>
    <ligand>
        <name>ADP</name>
        <dbReference type="ChEBI" id="CHEBI:456216"/>
    </ligand>
</feature>
<feature type="binding site" evidence="7 8 17 18 19 21 22 23 24">
    <location>
        <position position="48"/>
    </location>
    <ligand>
        <name>ADP</name>
        <dbReference type="ChEBI" id="CHEBI:456216"/>
    </ligand>
</feature>
<feature type="binding site" evidence="7 8 17 18 19 20 21 22 23 24">
    <location>
        <position position="99"/>
    </location>
    <ligand>
        <name>Mg(2+)</name>
        <dbReference type="ChEBI" id="CHEBI:18420"/>
    </ligand>
</feature>
<feature type="binding site" evidence="7 8 9 19 20 22 24 28 29 31">
    <location>
        <position position="100"/>
    </location>
    <ligand>
        <name>ADP</name>
        <dbReference type="ChEBI" id="CHEBI:456216"/>
    </ligand>
</feature>
<feature type="binding site" evidence="9 30">
    <location>
        <position position="100"/>
    </location>
    <ligand>
        <name>ATP</name>
        <dbReference type="ChEBI" id="CHEBI:30616"/>
    </ligand>
</feature>
<feature type="binding site" evidence="7 8 20 22">
    <location>
        <position position="101"/>
    </location>
    <ligand>
        <name>ADP</name>
        <dbReference type="ChEBI" id="CHEBI:456216"/>
    </ligand>
</feature>
<feature type="binding site" evidence="9 30">
    <location>
        <position position="101"/>
    </location>
    <ligand>
        <name>ATP</name>
        <dbReference type="ChEBI" id="CHEBI:30616"/>
    </ligand>
</feature>
<feature type="binding site" evidence="7 8 9 17 18 19 20 22 23 24 28 29 31">
    <location>
        <position position="102"/>
    </location>
    <ligand>
        <name>ADP</name>
        <dbReference type="ChEBI" id="CHEBI:456216"/>
    </ligand>
</feature>
<feature type="binding site" evidence="9 30">
    <location>
        <position position="102"/>
    </location>
    <ligand>
        <name>ATP</name>
        <dbReference type="ChEBI" id="CHEBI:30616"/>
    </ligand>
</feature>
<feature type="binding site" evidence="7 8 9 17 18 19 20 23 24 28 29 31">
    <location>
        <position position="103"/>
    </location>
    <ligand>
        <name>ADP</name>
        <dbReference type="ChEBI" id="CHEBI:456216"/>
    </ligand>
</feature>
<feature type="binding site" evidence="7 8 9 20 24 28 29 31">
    <location>
        <position position="169"/>
    </location>
    <ligand>
        <name>ADP</name>
        <dbReference type="ChEBI" id="CHEBI:456216"/>
    </ligand>
</feature>
<feature type="binding site" evidence="7 8 9 17 18 19 20 21 23 31">
    <location>
        <position position="170"/>
    </location>
    <ligand>
        <name>ADP</name>
        <dbReference type="ChEBI" id="CHEBI:456216"/>
    </ligand>
</feature>
<feature type="binding site" evidence="9 30">
    <location>
        <position position="170"/>
    </location>
    <ligand>
        <name>ATP</name>
        <dbReference type="ChEBI" id="CHEBI:30616"/>
    </ligand>
</feature>
<feature type="binding site" evidence="7 9 17 18 19 31">
    <location>
        <position position="171"/>
    </location>
    <ligand>
        <name>ADP</name>
        <dbReference type="ChEBI" id="CHEBI:456216"/>
    </ligand>
</feature>
<feature type="binding site" evidence="9 30">
    <location>
        <position position="171"/>
    </location>
    <ligand>
        <name>ATP</name>
        <dbReference type="ChEBI" id="CHEBI:30616"/>
    </ligand>
</feature>
<feature type="binding site" evidence="7 8 9 17 18 19 20 21 22 23 24 28 29 31">
    <location>
        <position position="412"/>
    </location>
    <ligand>
        <name>ADP</name>
        <dbReference type="ChEBI" id="CHEBI:456216"/>
    </ligand>
</feature>
<feature type="binding site" evidence="9 30">
    <location>
        <position position="412"/>
    </location>
    <ligand>
        <name>ATP</name>
        <dbReference type="ChEBI" id="CHEBI:30616"/>
    </ligand>
</feature>
<feature type="binding site" evidence="7 8 9 17 18 19 20 22 31">
    <location>
        <position position="499"/>
    </location>
    <ligand>
        <name>ADP</name>
        <dbReference type="ChEBI" id="CHEBI:456216"/>
    </ligand>
</feature>
<feature type="binding site" evidence="9 30">
    <location>
        <position position="499"/>
    </location>
    <ligand>
        <name>ATP</name>
        <dbReference type="ChEBI" id="CHEBI:30616"/>
    </ligand>
</feature>
<feature type="binding site" evidence="9 30">
    <location>
        <position position="504"/>
    </location>
    <ligand>
        <name>ATP</name>
        <dbReference type="ChEBI" id="CHEBI:30616"/>
    </ligand>
</feature>
<feature type="modified residue" description="N-acetylalanine" evidence="11">
    <location>
        <position position="2"/>
    </location>
</feature>
<feature type="modified residue" description="Phosphoserine" evidence="35 37 38">
    <location>
        <position position="23"/>
    </location>
</feature>
<feature type="modified residue" description="Phosphotyrosine" evidence="37 38">
    <location>
        <position position="30"/>
    </location>
</feature>
<feature type="modified residue" description="Phosphoserine" evidence="38">
    <location>
        <position position="162"/>
    </location>
</feature>
<feature type="modified residue" description="Phosphoserine" evidence="38">
    <location>
        <position position="213"/>
    </location>
</feature>
<feature type="modified residue" description="Phosphoserine" evidence="38">
    <location>
        <position position="269"/>
    </location>
</feature>
<feature type="modified residue" description="Phosphoserine" evidence="38">
    <location>
        <position position="317"/>
    </location>
</feature>
<feature type="modified residue" description="N6-acetyllysine" evidence="36">
    <location>
        <position position="318"/>
    </location>
</feature>
<feature type="modified residue" description="N6-acetyllysine" evidence="36">
    <location>
        <position position="400"/>
    </location>
</feature>
<feature type="modified residue" description="N6-acetyllysine" evidence="36">
    <location>
        <position position="466"/>
    </location>
</feature>
<feature type="modified residue" description="Phosphotyrosine" evidence="34">
    <location>
        <position position="505"/>
    </location>
</feature>
<feature type="modified residue" description="Phosphoserine" evidence="38">
    <location>
        <position position="537"/>
    </location>
</feature>
<feature type="cross-link" description="Glycyl lysine isopeptide (Lys-Gly) (interchain with G-Cter in SUMO2)" evidence="42">
    <location>
        <position position="224"/>
    </location>
</feature>
<feature type="cross-link" description="Glycyl lysine isopeptide (Lys-Gly) (interchain with G-Cter in SUMO2)" evidence="42">
    <location>
        <position position="254"/>
    </location>
</feature>
<feature type="cross-link" description="Glycyl lysine isopeptide (Lys-Gly) (interchain with G-Cter in SUMO2)" evidence="42">
    <location>
        <position position="260"/>
    </location>
</feature>
<feature type="cross-link" description="Glycyl lysine isopeptide (Lys-Gly) (interchain with G-Cter in SUMO1)" evidence="39">
    <location>
        <position position="459"/>
    </location>
</feature>
<feature type="cross-link" description="Glycyl lysine isopeptide (Lys-Gly) (interchain with G-Cter in SUMO2)" evidence="40 41 42">
    <location>
        <position position="534"/>
    </location>
</feature>
<feature type="cross-link" description="Glycyl lysine isopeptide (Lys-Gly) (interchain with G-Cter in SUMO2)" evidence="41 42">
    <location>
        <position position="539"/>
    </location>
</feature>
<feature type="splice variant" id="VSP_054691" description="In isoform 3." evidence="12">
    <original>MALHVPKAPGFAQMLKEGAKHFSGLEEAVYRNIQACKELAQTTRTAYGPNGMNKMVINHLEKLFVTNDAATILRELEV</original>
    <variation>MDQMV</variation>
    <location>
        <begin position="1"/>
        <end position="78"/>
    </location>
</feature>
<feature type="splice variant" id="VSP_054692" description="In isoform 2." evidence="12">
    <original>MALHVPKAPGFAQMLKEGAK</original>
    <variation>M</variation>
    <location>
        <begin position="1"/>
        <end position="20"/>
    </location>
</feature>
<feature type="sequence variant" id="VAR_052270" description="In dbSNP:rs16983693.">
    <original>H</original>
    <variation>Q</variation>
    <location>
        <position position="4"/>
    </location>
</feature>
<feature type="sequence variant" id="VAR_052271" description="In dbSNP:rs8129954.">
    <original>V</original>
    <variation>I</variation>
    <location>
        <position position="409"/>
    </location>
</feature>
<feature type="sequence conflict" description="In Ref. 1 and 2." evidence="13" ref="1 2">
    <original>N</original>
    <variation>K</variation>
    <location>
        <position position="50"/>
    </location>
</feature>
<feature type="sequence conflict" description="In Ref. 1; BAA02792." evidence="13" ref="1">
    <original>A</original>
    <variation>V</variation>
    <location>
        <position position="391"/>
    </location>
</feature>
<feature type="helix" evidence="43">
    <location>
        <begin position="11"/>
        <end position="14"/>
    </location>
</feature>
<feature type="strand" evidence="43">
    <location>
        <begin position="20"/>
        <end position="23"/>
    </location>
</feature>
<feature type="helix" evidence="43">
    <location>
        <begin position="24"/>
        <end position="27"/>
    </location>
</feature>
<feature type="helix" evidence="43">
    <location>
        <begin position="29"/>
        <end position="44"/>
    </location>
</feature>
<feature type="strand" evidence="46">
    <location>
        <begin position="47"/>
        <end position="49"/>
    </location>
</feature>
<feature type="strand" evidence="43">
    <location>
        <begin position="53"/>
        <end position="57"/>
    </location>
</feature>
<feature type="strand" evidence="46">
    <location>
        <begin position="58"/>
        <end position="60"/>
    </location>
</feature>
<feature type="strand" evidence="43">
    <location>
        <begin position="63"/>
        <end position="66"/>
    </location>
</feature>
<feature type="helix" evidence="43">
    <location>
        <begin position="69"/>
        <end position="75"/>
    </location>
</feature>
<feature type="helix" evidence="43">
    <location>
        <begin position="81"/>
        <end position="96"/>
    </location>
</feature>
<feature type="strand" evidence="46">
    <location>
        <begin position="97"/>
        <end position="99"/>
    </location>
</feature>
<feature type="helix" evidence="43">
    <location>
        <begin position="101"/>
        <end position="121"/>
    </location>
</feature>
<feature type="helix" evidence="43">
    <location>
        <begin position="125"/>
        <end position="146"/>
    </location>
</feature>
<feature type="strand" evidence="45">
    <location>
        <begin position="149"/>
        <end position="151"/>
    </location>
</feature>
<feature type="helix" evidence="43">
    <location>
        <begin position="158"/>
        <end position="164"/>
    </location>
</feature>
<feature type="helix" evidence="43">
    <location>
        <begin position="167"/>
        <end position="170"/>
    </location>
</feature>
<feature type="turn" evidence="44">
    <location>
        <begin position="173"/>
        <end position="175"/>
    </location>
</feature>
<feature type="helix" evidence="43">
    <location>
        <begin position="177"/>
        <end position="189"/>
    </location>
</feature>
<feature type="strand" evidence="43">
    <location>
        <begin position="193"/>
        <end position="195"/>
    </location>
</feature>
<feature type="helix" evidence="43">
    <location>
        <begin position="199"/>
        <end position="201"/>
    </location>
</feature>
<feature type="strand" evidence="43">
    <location>
        <begin position="202"/>
        <end position="210"/>
    </location>
</feature>
<feature type="helix" evidence="43">
    <location>
        <begin position="212"/>
        <end position="214"/>
    </location>
</feature>
<feature type="strand" evidence="43">
    <location>
        <begin position="216"/>
        <end position="224"/>
    </location>
</feature>
<feature type="strand" evidence="43">
    <location>
        <begin position="228"/>
        <end position="230"/>
    </location>
</feature>
<feature type="strand" evidence="43">
    <location>
        <begin position="233"/>
        <end position="237"/>
    </location>
</feature>
<feature type="strand" evidence="43">
    <location>
        <begin position="240"/>
        <end position="244"/>
    </location>
</feature>
<feature type="strand" evidence="43">
    <location>
        <begin position="255"/>
        <end position="259"/>
    </location>
</feature>
<feature type="helix" evidence="43">
    <location>
        <begin position="262"/>
        <end position="285"/>
    </location>
</feature>
<feature type="strand" evidence="43">
    <location>
        <begin position="290"/>
        <end position="295"/>
    </location>
</feature>
<feature type="helix" evidence="43">
    <location>
        <begin position="299"/>
        <end position="307"/>
    </location>
</feature>
<feature type="strand" evidence="43">
    <location>
        <begin position="311"/>
        <end position="314"/>
    </location>
</feature>
<feature type="helix" evidence="43">
    <location>
        <begin position="318"/>
        <end position="328"/>
    </location>
</feature>
<feature type="strand" evidence="43">
    <location>
        <begin position="333"/>
        <end position="335"/>
    </location>
</feature>
<feature type="turn" evidence="43">
    <location>
        <begin position="341"/>
        <end position="343"/>
    </location>
</feature>
<feature type="strand" evidence="43">
    <location>
        <begin position="347"/>
        <end position="355"/>
    </location>
</feature>
<feature type="strand" evidence="43">
    <location>
        <begin position="358"/>
        <end position="364"/>
    </location>
</feature>
<feature type="strand" evidence="43">
    <location>
        <begin position="366"/>
        <end position="368"/>
    </location>
</feature>
<feature type="strand" evidence="47">
    <location>
        <begin position="369"/>
        <end position="371"/>
    </location>
</feature>
<feature type="strand" evidence="43">
    <location>
        <begin position="373"/>
        <end position="380"/>
    </location>
</feature>
<feature type="helix" evidence="43">
    <location>
        <begin position="382"/>
        <end position="404"/>
    </location>
</feature>
<feature type="strand" evidence="43">
    <location>
        <begin position="407"/>
        <end position="410"/>
    </location>
</feature>
<feature type="turn" evidence="43">
    <location>
        <begin position="411"/>
        <end position="413"/>
    </location>
</feature>
<feature type="helix" evidence="43">
    <location>
        <begin position="414"/>
        <end position="429"/>
    </location>
</feature>
<feature type="helix" evidence="43">
    <location>
        <begin position="434"/>
        <end position="445"/>
    </location>
</feature>
<feature type="helix" evidence="43">
    <location>
        <begin position="447"/>
        <end position="456"/>
    </location>
</feature>
<feature type="helix" evidence="43">
    <location>
        <begin position="460"/>
        <end position="473"/>
    </location>
</feature>
<feature type="strand" evidence="43">
    <location>
        <begin position="478"/>
        <end position="480"/>
    </location>
</feature>
<feature type="strand" evidence="48">
    <location>
        <begin position="483"/>
        <end position="486"/>
    </location>
</feature>
<feature type="strand" evidence="43">
    <location>
        <begin position="489"/>
        <end position="491"/>
    </location>
</feature>
<feature type="helix" evidence="43">
    <location>
        <begin position="492"/>
        <end position="495"/>
    </location>
</feature>
<feature type="strand" evidence="43">
    <location>
        <begin position="498"/>
        <end position="500"/>
    </location>
</feature>
<feature type="helix" evidence="43">
    <location>
        <begin position="501"/>
        <end position="520"/>
    </location>
</feature>
<feature type="strand" evidence="43">
    <location>
        <begin position="521"/>
        <end position="526"/>
    </location>
</feature>
<feature type="helix" evidence="48">
    <location>
        <begin position="536"/>
        <end position="538"/>
    </location>
</feature>
<protein>
    <recommendedName>
        <fullName>T-complex protein 1 subunit theta</fullName>
        <shortName>TCP-1-theta</shortName>
        <ecNumber evidence="14 15 16">3.6.1.-</ecNumber>
    </recommendedName>
    <alternativeName>
        <fullName>CCT-theta</fullName>
    </alternativeName>
    <alternativeName>
        <fullName>Chaperonin containing T-complex polypeptide 1 subunit 8</fullName>
    </alternativeName>
    <alternativeName>
        <fullName>Renal carcinoma antigen NY-REN-15</fullName>
    </alternativeName>
</protein>